<accession>Q88DW6</accession>
<feature type="chain" id="PRO_0000208377" description="Acetyl-coenzyme A synthetase 2">
    <location>
        <begin position="1"/>
        <end position="644"/>
    </location>
</feature>
<feature type="binding site" evidence="1">
    <location>
        <begin position="189"/>
        <end position="192"/>
    </location>
    <ligand>
        <name>CoA</name>
        <dbReference type="ChEBI" id="CHEBI:57287"/>
    </ligand>
</feature>
<feature type="binding site" evidence="1">
    <location>
        <position position="307"/>
    </location>
    <ligand>
        <name>CoA</name>
        <dbReference type="ChEBI" id="CHEBI:57287"/>
    </ligand>
</feature>
<feature type="binding site" evidence="1">
    <location>
        <position position="331"/>
    </location>
    <ligand>
        <name>CoA</name>
        <dbReference type="ChEBI" id="CHEBI:57287"/>
    </ligand>
</feature>
<feature type="binding site" evidence="1">
    <location>
        <begin position="383"/>
        <end position="385"/>
    </location>
    <ligand>
        <name>ATP</name>
        <dbReference type="ChEBI" id="CHEBI:30616"/>
    </ligand>
</feature>
<feature type="binding site" evidence="1">
    <location>
        <begin position="407"/>
        <end position="412"/>
    </location>
    <ligand>
        <name>ATP</name>
        <dbReference type="ChEBI" id="CHEBI:30616"/>
    </ligand>
</feature>
<feature type="binding site" evidence="1">
    <location>
        <position position="496"/>
    </location>
    <ligand>
        <name>ATP</name>
        <dbReference type="ChEBI" id="CHEBI:30616"/>
    </ligand>
</feature>
<feature type="binding site" evidence="1">
    <location>
        <position position="511"/>
    </location>
    <ligand>
        <name>ATP</name>
        <dbReference type="ChEBI" id="CHEBI:30616"/>
    </ligand>
</feature>
<feature type="binding site" evidence="1">
    <location>
        <position position="519"/>
    </location>
    <ligand>
        <name>CoA</name>
        <dbReference type="ChEBI" id="CHEBI:57287"/>
    </ligand>
</feature>
<feature type="binding site" evidence="1">
    <location>
        <position position="522"/>
    </location>
    <ligand>
        <name>ATP</name>
        <dbReference type="ChEBI" id="CHEBI:30616"/>
    </ligand>
</feature>
<feature type="binding site" evidence="1">
    <location>
        <position position="533"/>
    </location>
    <ligand>
        <name>Mg(2+)</name>
        <dbReference type="ChEBI" id="CHEBI:18420"/>
    </ligand>
</feature>
<feature type="binding site" evidence="1">
    <location>
        <position position="535"/>
    </location>
    <ligand>
        <name>Mg(2+)</name>
        <dbReference type="ChEBI" id="CHEBI:18420"/>
    </ligand>
</feature>
<feature type="binding site" evidence="1">
    <location>
        <position position="538"/>
    </location>
    <ligand>
        <name>Mg(2+)</name>
        <dbReference type="ChEBI" id="CHEBI:18420"/>
    </ligand>
</feature>
<feature type="modified residue" description="N6-acetyllysine" evidence="1">
    <location>
        <position position="605"/>
    </location>
</feature>
<proteinExistence type="inferred from homology"/>
<comment type="function">
    <text evidence="1">Catalyzes the conversion of acetate into acetyl-CoA (AcCoA), an essential intermediate at the junction of anabolic and catabolic pathways. AcsA undergoes a two-step reaction. In the first half reaction, AcsA combines acetate with ATP to form acetyl-adenylate (AcAMP) intermediate. In the second half reaction, it can then transfer the acetyl group from AcAMP to the sulfhydryl group of CoA, forming the product AcCoA.</text>
</comment>
<comment type="catalytic activity">
    <reaction evidence="1">
        <text>acetate + ATP + CoA = acetyl-CoA + AMP + diphosphate</text>
        <dbReference type="Rhea" id="RHEA:23176"/>
        <dbReference type="ChEBI" id="CHEBI:30089"/>
        <dbReference type="ChEBI" id="CHEBI:30616"/>
        <dbReference type="ChEBI" id="CHEBI:33019"/>
        <dbReference type="ChEBI" id="CHEBI:57287"/>
        <dbReference type="ChEBI" id="CHEBI:57288"/>
        <dbReference type="ChEBI" id="CHEBI:456215"/>
        <dbReference type="EC" id="6.2.1.1"/>
    </reaction>
</comment>
<comment type="cofactor">
    <cofactor evidence="1">
        <name>Mg(2+)</name>
        <dbReference type="ChEBI" id="CHEBI:18420"/>
    </cofactor>
</comment>
<comment type="PTM">
    <text evidence="1">Acetylated. Deacetylation by the SIR2-homolog deacetylase activates the enzyme.</text>
</comment>
<comment type="similarity">
    <text evidence="1">Belongs to the ATP-dependent AMP-binding enzyme family.</text>
</comment>
<sequence length="644" mass="71251">MFDIRKYPQALAVSQSAALTPEDYRRLYRQSVEDPDTFWAEQAKRLDWIKPWSSVQQCDLHTGKARWFDGAQLNVSYNCIDRHLAQRGEQTALLWEGDDPKDSKAITYRELHRQVCRLANAMKARGVKKGDRVSIYMPMIPEAAFAMLACTRIGAIHSVVFGGFSPDALRDRILDADCRTVITADEGVRGGKRIPLKQNVDKALASCPAVSSVLVVRRTGGDVAWTEGRDLWYHEATKDAGDDCPPEPMEAEDPLFILYTSGSTGKPKGVLHTTGGYLLQATMTFKVVFDYRDGEVFWCTADVGWVTGHSYIVYGPLANGAISLMFEGVPNYPDTSRFWQVVDKHQVNIFYTAPTALRALMREGSAPLQSTSRKSLRLLGSVGEPINPEAWEWYFEEVGQKRCPIVDTWWQTETGGIMLTPLPGTQSLKPGCATQPMFGVQPVLLDEKGKLIEGPGAGVLAIKASWPGQIRSVYGDHQRMVDTYFKPLPGYYFTGDGARRDADGDYWITGRIDDVINVSGHRIGTAEVESALVLHDSVAEAAVVGYPHDLKGQGVYAFVTTMNGVTPDDTLKAELLALVSKEIGSFAKPELIQWAPALPKTRSGKIMRRILRKIACNELENLGDTSTLADPSVVQGLIDKRLNQ</sequence>
<protein>
    <recommendedName>
        <fullName evidence="1">Acetyl-coenzyme A synthetase 2</fullName>
        <shortName evidence="1">AcCoA synthetase 2</shortName>
        <shortName evidence="1">Acs 2</shortName>
        <ecNumber evidence="1">6.2.1.1</ecNumber>
    </recommendedName>
    <alternativeName>
        <fullName evidence="1">Acetate--CoA ligase 2</fullName>
    </alternativeName>
    <alternativeName>
        <fullName evidence="1">Acyl-activating enzyme 2</fullName>
    </alternativeName>
</protein>
<name>ACSA2_PSEPK</name>
<reference key="1">
    <citation type="journal article" date="2002" name="Environ. Microbiol.">
        <title>Complete genome sequence and comparative analysis of the metabolically versatile Pseudomonas putida KT2440.</title>
        <authorList>
            <person name="Nelson K.E."/>
            <person name="Weinel C."/>
            <person name="Paulsen I.T."/>
            <person name="Dodson R.J."/>
            <person name="Hilbert H."/>
            <person name="Martins dos Santos V.A.P."/>
            <person name="Fouts D.E."/>
            <person name="Gill S.R."/>
            <person name="Pop M."/>
            <person name="Holmes M."/>
            <person name="Brinkac L.M."/>
            <person name="Beanan M.J."/>
            <person name="DeBoy R.T."/>
            <person name="Daugherty S.C."/>
            <person name="Kolonay J.F."/>
            <person name="Madupu R."/>
            <person name="Nelson W.C."/>
            <person name="White O."/>
            <person name="Peterson J.D."/>
            <person name="Khouri H.M."/>
            <person name="Hance I."/>
            <person name="Chris Lee P."/>
            <person name="Holtzapple E.K."/>
            <person name="Scanlan D."/>
            <person name="Tran K."/>
            <person name="Moazzez A."/>
            <person name="Utterback T.R."/>
            <person name="Rizzo M."/>
            <person name="Lee K."/>
            <person name="Kosack D."/>
            <person name="Moestl D."/>
            <person name="Wedler H."/>
            <person name="Lauber J."/>
            <person name="Stjepandic D."/>
            <person name="Hoheisel J."/>
            <person name="Straetz M."/>
            <person name="Heim S."/>
            <person name="Kiewitz C."/>
            <person name="Eisen J.A."/>
            <person name="Timmis K.N."/>
            <person name="Duesterhoeft A."/>
            <person name="Tuemmler B."/>
            <person name="Fraser C.M."/>
        </authorList>
    </citation>
    <scope>NUCLEOTIDE SEQUENCE [LARGE SCALE GENOMIC DNA]</scope>
    <source>
        <strain>ATCC 47054 / DSM 6125 / CFBP 8728 / NCIMB 11950 / KT2440</strain>
    </source>
</reference>
<organism>
    <name type="scientific">Pseudomonas putida (strain ATCC 47054 / DSM 6125 / CFBP 8728 / NCIMB 11950 / KT2440)</name>
    <dbReference type="NCBI Taxonomy" id="160488"/>
    <lineage>
        <taxon>Bacteria</taxon>
        <taxon>Pseudomonadati</taxon>
        <taxon>Pseudomonadota</taxon>
        <taxon>Gammaproteobacteria</taxon>
        <taxon>Pseudomonadales</taxon>
        <taxon>Pseudomonadaceae</taxon>
        <taxon>Pseudomonas</taxon>
    </lineage>
</organism>
<keyword id="KW-0007">Acetylation</keyword>
<keyword id="KW-0067">ATP-binding</keyword>
<keyword id="KW-0436">Ligase</keyword>
<keyword id="KW-0460">Magnesium</keyword>
<keyword id="KW-0479">Metal-binding</keyword>
<keyword id="KW-0547">Nucleotide-binding</keyword>
<keyword id="KW-1185">Reference proteome</keyword>
<gene>
    <name evidence="1" type="primary">acsA2</name>
    <name type="synonym">acsB</name>
    <name type="ordered locus">PP_4702</name>
</gene>
<dbReference type="EC" id="6.2.1.1" evidence="1"/>
<dbReference type="EMBL" id="AE015451">
    <property type="protein sequence ID" value="AAN70275.1"/>
    <property type="molecule type" value="Genomic_DNA"/>
</dbReference>
<dbReference type="RefSeq" id="NP_746811.1">
    <property type="nucleotide sequence ID" value="NC_002947.4"/>
</dbReference>
<dbReference type="SMR" id="Q88DW6"/>
<dbReference type="STRING" id="160488.PP_4702"/>
<dbReference type="PaxDb" id="160488-PP_4702"/>
<dbReference type="KEGG" id="ppu:PP_4702"/>
<dbReference type="PATRIC" id="fig|160488.4.peg.5012"/>
<dbReference type="eggNOG" id="COG0365">
    <property type="taxonomic scope" value="Bacteria"/>
</dbReference>
<dbReference type="HOGENOM" id="CLU_000022_3_6_6"/>
<dbReference type="OrthoDB" id="9803968at2"/>
<dbReference type="PhylomeDB" id="Q88DW6"/>
<dbReference type="BioCyc" id="PPUT160488:G1G01-5023-MONOMER"/>
<dbReference type="Proteomes" id="UP000000556">
    <property type="component" value="Chromosome"/>
</dbReference>
<dbReference type="GO" id="GO:0005829">
    <property type="term" value="C:cytosol"/>
    <property type="evidence" value="ECO:0007669"/>
    <property type="project" value="TreeGrafter"/>
</dbReference>
<dbReference type="GO" id="GO:0003987">
    <property type="term" value="F:acetate-CoA ligase activity"/>
    <property type="evidence" value="ECO:0007669"/>
    <property type="project" value="UniProtKB-UniRule"/>
</dbReference>
<dbReference type="GO" id="GO:0016208">
    <property type="term" value="F:AMP binding"/>
    <property type="evidence" value="ECO:0007669"/>
    <property type="project" value="InterPro"/>
</dbReference>
<dbReference type="GO" id="GO:0005524">
    <property type="term" value="F:ATP binding"/>
    <property type="evidence" value="ECO:0007669"/>
    <property type="project" value="UniProtKB-KW"/>
</dbReference>
<dbReference type="GO" id="GO:0046872">
    <property type="term" value="F:metal ion binding"/>
    <property type="evidence" value="ECO:0007669"/>
    <property type="project" value="UniProtKB-KW"/>
</dbReference>
<dbReference type="GO" id="GO:0019427">
    <property type="term" value="P:acetyl-CoA biosynthetic process from acetate"/>
    <property type="evidence" value="ECO:0007669"/>
    <property type="project" value="InterPro"/>
</dbReference>
<dbReference type="CDD" id="cd05966">
    <property type="entry name" value="ACS"/>
    <property type="match status" value="1"/>
</dbReference>
<dbReference type="FunFam" id="3.30.300.30:FF:000004">
    <property type="entry name" value="Acetyl-coenzyme A synthetase"/>
    <property type="match status" value="1"/>
</dbReference>
<dbReference type="FunFam" id="3.40.50.12780:FF:000001">
    <property type="entry name" value="Acetyl-coenzyme A synthetase"/>
    <property type="match status" value="1"/>
</dbReference>
<dbReference type="Gene3D" id="3.30.300.30">
    <property type="match status" value="1"/>
</dbReference>
<dbReference type="Gene3D" id="3.40.50.12780">
    <property type="entry name" value="N-terminal domain of ligase-like"/>
    <property type="match status" value="1"/>
</dbReference>
<dbReference type="HAMAP" id="MF_01123">
    <property type="entry name" value="Ac_CoA_synth"/>
    <property type="match status" value="1"/>
</dbReference>
<dbReference type="InterPro" id="IPR011904">
    <property type="entry name" value="Ac_CoA_lig"/>
</dbReference>
<dbReference type="InterPro" id="IPR032387">
    <property type="entry name" value="ACAS_N"/>
</dbReference>
<dbReference type="InterPro" id="IPR025110">
    <property type="entry name" value="AMP-bd_C"/>
</dbReference>
<dbReference type="InterPro" id="IPR045851">
    <property type="entry name" value="AMP-bd_C_sf"/>
</dbReference>
<dbReference type="InterPro" id="IPR020845">
    <property type="entry name" value="AMP-binding_CS"/>
</dbReference>
<dbReference type="InterPro" id="IPR000873">
    <property type="entry name" value="AMP-dep_synth/lig_dom"/>
</dbReference>
<dbReference type="InterPro" id="IPR042099">
    <property type="entry name" value="ANL_N_sf"/>
</dbReference>
<dbReference type="NCBIfam" id="TIGR02188">
    <property type="entry name" value="Ac_CoA_lig_AcsA"/>
    <property type="match status" value="1"/>
</dbReference>
<dbReference type="NCBIfam" id="NF001208">
    <property type="entry name" value="PRK00174.1"/>
    <property type="match status" value="1"/>
</dbReference>
<dbReference type="PANTHER" id="PTHR24095">
    <property type="entry name" value="ACETYL-COENZYME A SYNTHETASE"/>
    <property type="match status" value="1"/>
</dbReference>
<dbReference type="PANTHER" id="PTHR24095:SF14">
    <property type="entry name" value="ACETYL-COENZYME A SYNTHETASE 1"/>
    <property type="match status" value="1"/>
</dbReference>
<dbReference type="Pfam" id="PF16177">
    <property type="entry name" value="ACAS_N"/>
    <property type="match status" value="1"/>
</dbReference>
<dbReference type="Pfam" id="PF00501">
    <property type="entry name" value="AMP-binding"/>
    <property type="match status" value="1"/>
</dbReference>
<dbReference type="Pfam" id="PF13193">
    <property type="entry name" value="AMP-binding_C"/>
    <property type="match status" value="1"/>
</dbReference>
<dbReference type="SUPFAM" id="SSF56801">
    <property type="entry name" value="Acetyl-CoA synthetase-like"/>
    <property type="match status" value="1"/>
</dbReference>
<dbReference type="PROSITE" id="PS00455">
    <property type="entry name" value="AMP_BINDING"/>
    <property type="match status" value="1"/>
</dbReference>
<evidence type="ECO:0000255" key="1">
    <source>
        <dbReference type="HAMAP-Rule" id="MF_01123"/>
    </source>
</evidence>